<feature type="chain" id="PRO_0000063699" description="Keratin, type II cuticular Hb3">
    <location>
        <begin position="1"/>
        <end position="493"/>
    </location>
</feature>
<feature type="domain" description="IF rod" evidence="2">
    <location>
        <begin position="111"/>
        <end position="422"/>
    </location>
</feature>
<feature type="region of interest" description="Head">
    <location>
        <begin position="1"/>
        <end position="111"/>
    </location>
</feature>
<feature type="region of interest" description="Coil 1A">
    <location>
        <begin position="112"/>
        <end position="146"/>
    </location>
</feature>
<feature type="region of interest" description="Linker 1">
    <location>
        <begin position="147"/>
        <end position="156"/>
    </location>
</feature>
<feature type="region of interest" description="Coil 1B">
    <location>
        <begin position="157"/>
        <end position="257"/>
    </location>
</feature>
<feature type="region of interest" description="Linker 12">
    <location>
        <begin position="258"/>
        <end position="274"/>
    </location>
</feature>
<feature type="region of interest" description="Coil 2">
    <location>
        <begin position="275"/>
        <end position="418"/>
    </location>
</feature>
<feature type="region of interest" description="Tail">
    <location>
        <begin position="419"/>
        <end position="493"/>
    </location>
</feature>
<feature type="cross-link" description="Glycyl lysine isopeptide (Lys-Gly) (interchain with G-Cter in SUMO1)" evidence="1">
    <location>
        <position position="217"/>
    </location>
</feature>
<feature type="sequence variant" id="VAR_018119" description="In dbSNP:rs2857663." evidence="4 8">
    <original>R</original>
    <variation>C</variation>
    <location>
        <position position="149"/>
    </location>
</feature>
<feature type="sequence variant" id="VAR_018120" description="In dbSNP:rs2852464." evidence="4 8">
    <original>I</original>
    <variation>M</variation>
    <location>
        <position position="279"/>
    </location>
</feature>
<feature type="sequence variant" id="VAR_023052" description="In MNLIX; dbSNP:rs57802288." evidence="5 6">
    <original>E</original>
    <variation>K</variation>
    <location>
        <position position="407"/>
    </location>
</feature>
<feature type="sequence variant" id="VAR_073049" description="In MNLIX; dbSNP:rs1438087533." evidence="6">
    <original>E</original>
    <variation>K</variation>
    <location>
        <position position="418"/>
    </location>
</feature>
<feature type="sequence variant" id="VAR_018121" description="In dbSNP:rs2857671." evidence="3 4 8">
    <original>H</original>
    <variation>Y</variation>
    <location>
        <position position="493"/>
    </location>
</feature>
<feature type="sequence conflict" description="In Ref. 1; CAA67578." evidence="9" ref="1">
    <original>S</original>
    <variation>D</variation>
    <location>
        <position position="67"/>
    </location>
</feature>
<feature type="sequence conflict" description="In Ref. 3; BAG37418." evidence="9" ref="3">
    <original>I</original>
    <variation>V</variation>
    <location>
        <position position="314"/>
    </location>
</feature>
<feature type="sequence conflict" description="In Ref. 3; BAG37418." evidence="9" ref="3">
    <original>C</original>
    <variation>R</variation>
    <location>
        <position position="473"/>
    </location>
</feature>
<dbReference type="EMBL" id="X99141">
    <property type="protein sequence ID" value="CAA67578.1"/>
    <property type="molecule type" value="mRNA"/>
</dbReference>
<dbReference type="EMBL" id="Y19208">
    <property type="protein sequence ID" value="CAB76828.1"/>
    <property type="molecule type" value="Genomic_DNA"/>
</dbReference>
<dbReference type="EMBL" id="AK314904">
    <property type="protein sequence ID" value="BAG37418.1"/>
    <property type="molecule type" value="mRNA"/>
</dbReference>
<dbReference type="EMBL" id="BC069546">
    <property type="protein sequence ID" value="AAH69546.1"/>
    <property type="molecule type" value="mRNA"/>
</dbReference>
<dbReference type="EMBL" id="BC128063">
    <property type="protein sequence ID" value="AAI28064.1"/>
    <property type="molecule type" value="mRNA"/>
</dbReference>
<dbReference type="CCDS" id="CCDS8823.1"/>
<dbReference type="RefSeq" id="NP_002273.3">
    <property type="nucleotide sequence ID" value="NM_002282.3"/>
</dbReference>
<dbReference type="SMR" id="P78385"/>
<dbReference type="BioGRID" id="110087">
    <property type="interactions" value="83"/>
</dbReference>
<dbReference type="FunCoup" id="P78385">
    <property type="interactions" value="50"/>
</dbReference>
<dbReference type="IntAct" id="P78385">
    <property type="interactions" value="58"/>
</dbReference>
<dbReference type="STRING" id="9606.ENSP00000293670"/>
<dbReference type="ChEMBL" id="CHEMBL4523262"/>
<dbReference type="iPTMnet" id="P78385"/>
<dbReference type="PhosphoSitePlus" id="P78385"/>
<dbReference type="SwissPalm" id="P78385"/>
<dbReference type="BioMuta" id="KRT83"/>
<dbReference type="DMDM" id="218511666"/>
<dbReference type="jPOST" id="P78385"/>
<dbReference type="MassIVE" id="P78385"/>
<dbReference type="PaxDb" id="9606-ENSP00000293670"/>
<dbReference type="PeptideAtlas" id="P78385"/>
<dbReference type="ProteomicsDB" id="57609"/>
<dbReference type="Antibodypedia" id="26572">
    <property type="antibodies" value="62 antibodies from 15 providers"/>
</dbReference>
<dbReference type="DNASU" id="3889"/>
<dbReference type="Ensembl" id="ENST00000293670.3">
    <property type="protein sequence ID" value="ENSP00000293670.3"/>
    <property type="gene ID" value="ENSG00000170523.3"/>
</dbReference>
<dbReference type="GeneID" id="3889"/>
<dbReference type="KEGG" id="hsa:3889"/>
<dbReference type="MANE-Select" id="ENST00000293670.3">
    <property type="protein sequence ID" value="ENSP00000293670.3"/>
    <property type="RefSeq nucleotide sequence ID" value="NM_002282.3"/>
    <property type="RefSeq protein sequence ID" value="NP_002273.3"/>
</dbReference>
<dbReference type="UCSC" id="uc001saf.2">
    <property type="organism name" value="human"/>
</dbReference>
<dbReference type="AGR" id="HGNC:6460"/>
<dbReference type="CTD" id="3889"/>
<dbReference type="DisGeNET" id="3889"/>
<dbReference type="GeneCards" id="KRT83"/>
<dbReference type="HGNC" id="HGNC:6460">
    <property type="gene designation" value="KRT83"/>
</dbReference>
<dbReference type="HPA" id="ENSG00000170523">
    <property type="expression patterns" value="Tissue enriched (skin)"/>
</dbReference>
<dbReference type="MalaCards" id="KRT83"/>
<dbReference type="MIM" id="158000">
    <property type="type" value="phenotype"/>
</dbReference>
<dbReference type="MIM" id="602765">
    <property type="type" value="gene"/>
</dbReference>
<dbReference type="MIM" id="617756">
    <property type="type" value="phenotype"/>
</dbReference>
<dbReference type="neXtProt" id="NX_P78385"/>
<dbReference type="OpenTargets" id="ENSG00000170523"/>
<dbReference type="Orphanet" id="573">
    <property type="disease" value="Monilethrix"/>
</dbReference>
<dbReference type="Orphanet" id="316">
    <property type="disease" value="Progressive symmetric erythrokeratodermia"/>
</dbReference>
<dbReference type="PharmGKB" id="PA30249"/>
<dbReference type="VEuPathDB" id="HostDB:ENSG00000170523"/>
<dbReference type="eggNOG" id="ENOG502SKJW">
    <property type="taxonomic scope" value="Eukaryota"/>
</dbReference>
<dbReference type="GeneTree" id="ENSGT00940000161838"/>
<dbReference type="HOGENOM" id="CLU_012560_5_0_1"/>
<dbReference type="InParanoid" id="P78385"/>
<dbReference type="OMA" id="KPCGGSC"/>
<dbReference type="OrthoDB" id="2441647at2759"/>
<dbReference type="PAN-GO" id="P78385">
    <property type="GO annotations" value="4 GO annotations based on evolutionary models"/>
</dbReference>
<dbReference type="PhylomeDB" id="P78385"/>
<dbReference type="TreeFam" id="TF317854"/>
<dbReference type="PathwayCommons" id="P78385"/>
<dbReference type="Reactome" id="R-HSA-6805567">
    <property type="pathway name" value="Keratinization"/>
</dbReference>
<dbReference type="Reactome" id="R-HSA-6809371">
    <property type="pathway name" value="Formation of the cornified envelope"/>
</dbReference>
<dbReference type="SignaLink" id="P78385"/>
<dbReference type="BioGRID-ORCS" id="3889">
    <property type="hits" value="21 hits in 1130 CRISPR screens"/>
</dbReference>
<dbReference type="ChiTaRS" id="KRT83">
    <property type="organism name" value="human"/>
</dbReference>
<dbReference type="GeneWiki" id="KRT83"/>
<dbReference type="GenomeRNAi" id="3889"/>
<dbReference type="Pharos" id="P78385">
    <property type="development level" value="Tbio"/>
</dbReference>
<dbReference type="PRO" id="PR:P78385"/>
<dbReference type="Proteomes" id="UP000005640">
    <property type="component" value="Chromosome 12"/>
</dbReference>
<dbReference type="RNAct" id="P78385">
    <property type="molecule type" value="protein"/>
</dbReference>
<dbReference type="Bgee" id="ENSG00000170523">
    <property type="expression patterns" value="Expressed in male germ line stem cell (sensu Vertebrata) in testis and 72 other cell types or tissues"/>
</dbReference>
<dbReference type="GO" id="GO:0005829">
    <property type="term" value="C:cytosol"/>
    <property type="evidence" value="ECO:0000304"/>
    <property type="project" value="Reactome"/>
</dbReference>
<dbReference type="GO" id="GO:0005615">
    <property type="term" value="C:extracellular space"/>
    <property type="evidence" value="ECO:0007005"/>
    <property type="project" value="UniProtKB"/>
</dbReference>
<dbReference type="GO" id="GO:0045095">
    <property type="term" value="C:keratin filament"/>
    <property type="evidence" value="ECO:0000318"/>
    <property type="project" value="GO_Central"/>
</dbReference>
<dbReference type="GO" id="GO:0030280">
    <property type="term" value="F:structural constituent of skin epidermis"/>
    <property type="evidence" value="ECO:0000318"/>
    <property type="project" value="GO_Central"/>
</dbReference>
<dbReference type="GO" id="GO:0008544">
    <property type="term" value="P:epidermis development"/>
    <property type="evidence" value="ECO:0000304"/>
    <property type="project" value="ProtInc"/>
</dbReference>
<dbReference type="GO" id="GO:0042633">
    <property type="term" value="P:hair cycle"/>
    <property type="evidence" value="ECO:0000314"/>
    <property type="project" value="UniProtKB"/>
</dbReference>
<dbReference type="GO" id="GO:0045109">
    <property type="term" value="P:intermediate filament organization"/>
    <property type="evidence" value="ECO:0000318"/>
    <property type="project" value="GO_Central"/>
</dbReference>
<dbReference type="GO" id="GO:0031424">
    <property type="term" value="P:keratinization"/>
    <property type="evidence" value="ECO:0000318"/>
    <property type="project" value="GO_Central"/>
</dbReference>
<dbReference type="FunFam" id="1.20.5.170:FF:000004">
    <property type="entry name" value="Keratin, type II cytoskeletal 5"/>
    <property type="match status" value="1"/>
</dbReference>
<dbReference type="FunFam" id="1.20.5.1160:FF:000024">
    <property type="entry name" value="Putative keratin-87 protein"/>
    <property type="match status" value="1"/>
</dbReference>
<dbReference type="FunFam" id="1.20.5.500:FF:000001">
    <property type="entry name" value="Type II keratin 23"/>
    <property type="match status" value="1"/>
</dbReference>
<dbReference type="Gene3D" id="1.20.5.170">
    <property type="match status" value="1"/>
</dbReference>
<dbReference type="Gene3D" id="1.20.5.500">
    <property type="entry name" value="Single helix bin"/>
    <property type="match status" value="1"/>
</dbReference>
<dbReference type="Gene3D" id="1.20.5.1160">
    <property type="entry name" value="Vasodilator-stimulated phosphoprotein"/>
    <property type="match status" value="1"/>
</dbReference>
<dbReference type="InterPro" id="IPR009030">
    <property type="entry name" value="Growth_fac_rcpt_cys_sf"/>
</dbReference>
<dbReference type="InterPro" id="IPR018039">
    <property type="entry name" value="IF_conserved"/>
</dbReference>
<dbReference type="InterPro" id="IPR039008">
    <property type="entry name" value="IF_rod_dom"/>
</dbReference>
<dbReference type="InterPro" id="IPR032444">
    <property type="entry name" value="Keratin_2_head"/>
</dbReference>
<dbReference type="InterPro" id="IPR003054">
    <property type="entry name" value="Keratin_II"/>
</dbReference>
<dbReference type="PANTHER" id="PTHR45616">
    <property type="entry name" value="GATA-TYPE DOMAIN-CONTAINING PROTEIN"/>
    <property type="match status" value="1"/>
</dbReference>
<dbReference type="PANTHER" id="PTHR45616:SF52">
    <property type="entry name" value="KERATIN, TYPE II CUTICULAR HB3"/>
    <property type="match status" value="1"/>
</dbReference>
<dbReference type="Pfam" id="PF00038">
    <property type="entry name" value="Filament"/>
    <property type="match status" value="1"/>
</dbReference>
<dbReference type="Pfam" id="PF16208">
    <property type="entry name" value="Keratin_2_head"/>
    <property type="match status" value="1"/>
</dbReference>
<dbReference type="PRINTS" id="PR01276">
    <property type="entry name" value="TYPE2KERATIN"/>
</dbReference>
<dbReference type="SMART" id="SM01391">
    <property type="entry name" value="Filament"/>
    <property type="match status" value="1"/>
</dbReference>
<dbReference type="SUPFAM" id="SSF57184">
    <property type="entry name" value="Growth factor receptor domain"/>
    <property type="match status" value="1"/>
</dbReference>
<dbReference type="SUPFAM" id="SSF64593">
    <property type="entry name" value="Intermediate filament protein, coiled coil region"/>
    <property type="match status" value="2"/>
</dbReference>
<dbReference type="PROSITE" id="PS00226">
    <property type="entry name" value="IF_ROD_1"/>
    <property type="match status" value="1"/>
</dbReference>
<dbReference type="PROSITE" id="PS51842">
    <property type="entry name" value="IF_ROD_2"/>
    <property type="match status" value="1"/>
</dbReference>
<protein>
    <recommendedName>
        <fullName>Keratin, type II cuticular Hb3</fullName>
    </recommendedName>
    <alternativeName>
        <fullName>Hair keratin K2.10</fullName>
    </alternativeName>
    <alternativeName>
        <fullName>Keratin-83</fullName>
        <shortName>K83</shortName>
    </alternativeName>
    <alternativeName>
        <fullName>Type II hair keratin Hb3</fullName>
    </alternativeName>
    <alternativeName>
        <fullName>Type-II keratin Kb23</fullName>
    </alternativeName>
</protein>
<evidence type="ECO:0000250" key="1">
    <source>
        <dbReference type="UniProtKB" id="P78386"/>
    </source>
</evidence>
<evidence type="ECO:0000255" key="2">
    <source>
        <dbReference type="PROSITE-ProRule" id="PRU01188"/>
    </source>
</evidence>
<evidence type="ECO:0000269" key="3">
    <source>
    </source>
</evidence>
<evidence type="ECO:0000269" key="4">
    <source>
    </source>
</evidence>
<evidence type="ECO:0000269" key="5">
    <source>
    </source>
</evidence>
<evidence type="ECO:0000269" key="6">
    <source>
    </source>
</evidence>
<evidence type="ECO:0000269" key="7">
    <source>
    </source>
</evidence>
<evidence type="ECO:0000269" key="8">
    <source>
    </source>
</evidence>
<evidence type="ECO:0000305" key="9"/>
<gene>
    <name type="primary">KRT83</name>
    <name type="synonym">KRTHB3</name>
</gene>
<sequence length="493" mass="54195">MTCGFNSIGCGFRPGNFSCVSACGPRPSRCCITAAPYRGISCYRGLTGGFGSHSVCGGFRAGSCGRSFGYRSGGVCGPSPPCITTVSVNESLLTPLNLEIDPNAQCVKQEEKEQIKSLNSRFAAFIDKVRFLEQQNKLLETKLQFYQNRECCQSNLEPLFAGYIETLRREAECVEADSGRLASELNHVQEVLEGYKKKYEEEVALRATAENEFVALKKDVDCAYLRKSDLEANVEALIQEIDFLRRLYEEEIRILQSHISDTSVVVKLDNSRDLNMDCIVAEIKAQYDDIATRSRAEAESWYRSKCEEMKATVIRHGETLRRTKEEINELNRMIQRLTAEVENAKCQNSKLEAAVAQSEQQGEAALSDARCKLAELEGALQKAKQDMACLIREYQEVMNSKLGLDIEIATYRRLLEGEEQRLCEGVEAVNVCVSSSRGGVVCGDLCVSGSRPVTGSVCSAPCNGNLVVSTGLCKPCGQLNTTCGGGSCGQGRH</sequence>
<reference key="1">
    <citation type="journal article" date="1997" name="Differentiation">
        <title>Sequences and differential expression of three novel human type-II hair keratins.</title>
        <authorList>
            <person name="Rogers M.A."/>
            <person name="Langbein L."/>
            <person name="Praetzel S."/>
            <person name="Krieg T."/>
            <person name="Winter H."/>
            <person name="Schweizer J."/>
        </authorList>
    </citation>
    <scope>NUCLEOTIDE SEQUENCE [MRNA]</scope>
    <scope>TISSUE SPECIFICITY</scope>
    <scope>VARIANTS CYS-149; MET-279 AND TYR-493</scope>
    <source>
        <tissue>Scalp</tissue>
    </source>
</reference>
<reference key="2">
    <citation type="journal article" date="2000" name="J. Invest. Dermatol.">
        <title>Characterization of a 300 kbp region of human DNA containing the type II hair keratin.</title>
        <authorList>
            <person name="Rogers M.A."/>
            <person name="Winter H."/>
            <person name="Langbein L."/>
            <person name="Wolf C."/>
            <person name="Schweizer J."/>
        </authorList>
    </citation>
    <scope>NUCLEOTIDE SEQUENCE [GENOMIC DNA]</scope>
</reference>
<reference key="3">
    <citation type="journal article" date="2004" name="Nat. Genet.">
        <title>Complete sequencing and characterization of 21,243 full-length human cDNAs.</title>
        <authorList>
            <person name="Ota T."/>
            <person name="Suzuki Y."/>
            <person name="Nishikawa T."/>
            <person name="Otsuki T."/>
            <person name="Sugiyama T."/>
            <person name="Irie R."/>
            <person name="Wakamatsu A."/>
            <person name="Hayashi K."/>
            <person name="Sato H."/>
            <person name="Nagai K."/>
            <person name="Kimura K."/>
            <person name="Makita H."/>
            <person name="Sekine M."/>
            <person name="Obayashi M."/>
            <person name="Nishi T."/>
            <person name="Shibahara T."/>
            <person name="Tanaka T."/>
            <person name="Ishii S."/>
            <person name="Yamamoto J."/>
            <person name="Saito K."/>
            <person name="Kawai Y."/>
            <person name="Isono Y."/>
            <person name="Nakamura Y."/>
            <person name="Nagahari K."/>
            <person name="Murakami K."/>
            <person name="Yasuda T."/>
            <person name="Iwayanagi T."/>
            <person name="Wagatsuma M."/>
            <person name="Shiratori A."/>
            <person name="Sudo H."/>
            <person name="Hosoiri T."/>
            <person name="Kaku Y."/>
            <person name="Kodaira H."/>
            <person name="Kondo H."/>
            <person name="Sugawara M."/>
            <person name="Takahashi M."/>
            <person name="Kanda K."/>
            <person name="Yokoi T."/>
            <person name="Furuya T."/>
            <person name="Kikkawa E."/>
            <person name="Omura Y."/>
            <person name="Abe K."/>
            <person name="Kamihara K."/>
            <person name="Katsuta N."/>
            <person name="Sato K."/>
            <person name="Tanikawa M."/>
            <person name="Yamazaki M."/>
            <person name="Ninomiya K."/>
            <person name="Ishibashi T."/>
            <person name="Yamashita H."/>
            <person name="Murakawa K."/>
            <person name="Fujimori K."/>
            <person name="Tanai H."/>
            <person name="Kimata M."/>
            <person name="Watanabe M."/>
            <person name="Hiraoka S."/>
            <person name="Chiba Y."/>
            <person name="Ishida S."/>
            <person name="Ono Y."/>
            <person name="Takiguchi S."/>
            <person name="Watanabe S."/>
            <person name="Yosida M."/>
            <person name="Hotuta T."/>
            <person name="Kusano J."/>
            <person name="Kanehori K."/>
            <person name="Takahashi-Fujii A."/>
            <person name="Hara H."/>
            <person name="Tanase T.-O."/>
            <person name="Nomura Y."/>
            <person name="Togiya S."/>
            <person name="Komai F."/>
            <person name="Hara R."/>
            <person name="Takeuchi K."/>
            <person name="Arita M."/>
            <person name="Imose N."/>
            <person name="Musashino K."/>
            <person name="Yuuki H."/>
            <person name="Oshima A."/>
            <person name="Sasaki N."/>
            <person name="Aotsuka S."/>
            <person name="Yoshikawa Y."/>
            <person name="Matsunawa H."/>
            <person name="Ichihara T."/>
            <person name="Shiohata N."/>
            <person name="Sano S."/>
            <person name="Moriya S."/>
            <person name="Momiyama H."/>
            <person name="Satoh N."/>
            <person name="Takami S."/>
            <person name="Terashima Y."/>
            <person name="Suzuki O."/>
            <person name="Nakagawa S."/>
            <person name="Senoh A."/>
            <person name="Mizoguchi H."/>
            <person name="Goto Y."/>
            <person name="Shimizu F."/>
            <person name="Wakebe H."/>
            <person name="Hishigaki H."/>
            <person name="Watanabe T."/>
            <person name="Sugiyama A."/>
            <person name="Takemoto M."/>
            <person name="Kawakami B."/>
            <person name="Yamazaki M."/>
            <person name="Watanabe K."/>
            <person name="Kumagai A."/>
            <person name="Itakura S."/>
            <person name="Fukuzumi Y."/>
            <person name="Fujimori Y."/>
            <person name="Komiyama M."/>
            <person name="Tashiro H."/>
            <person name="Tanigami A."/>
            <person name="Fujiwara T."/>
            <person name="Ono T."/>
            <person name="Yamada K."/>
            <person name="Fujii Y."/>
            <person name="Ozaki K."/>
            <person name="Hirao M."/>
            <person name="Ohmori Y."/>
            <person name="Kawabata A."/>
            <person name="Hikiji T."/>
            <person name="Kobatake N."/>
            <person name="Inagaki H."/>
            <person name="Ikema Y."/>
            <person name="Okamoto S."/>
            <person name="Okitani R."/>
            <person name="Kawakami T."/>
            <person name="Noguchi S."/>
            <person name="Itoh T."/>
            <person name="Shigeta K."/>
            <person name="Senba T."/>
            <person name="Matsumura K."/>
            <person name="Nakajima Y."/>
            <person name="Mizuno T."/>
            <person name="Morinaga M."/>
            <person name="Sasaki M."/>
            <person name="Togashi T."/>
            <person name="Oyama M."/>
            <person name="Hata H."/>
            <person name="Watanabe M."/>
            <person name="Komatsu T."/>
            <person name="Mizushima-Sugano J."/>
            <person name="Satoh T."/>
            <person name="Shirai Y."/>
            <person name="Takahashi Y."/>
            <person name="Nakagawa K."/>
            <person name="Okumura K."/>
            <person name="Nagase T."/>
            <person name="Nomura N."/>
            <person name="Kikuchi H."/>
            <person name="Masuho Y."/>
            <person name="Yamashita R."/>
            <person name="Nakai K."/>
            <person name="Yada T."/>
            <person name="Nakamura Y."/>
            <person name="Ohara O."/>
            <person name="Isogai T."/>
            <person name="Sugano S."/>
        </authorList>
    </citation>
    <scope>NUCLEOTIDE SEQUENCE [LARGE SCALE MRNA]</scope>
    <scope>VARIANT TYR-493</scope>
    <source>
        <tissue>Cerebellum</tissue>
    </source>
</reference>
<reference key="4">
    <citation type="journal article" date="2004" name="Genome Res.">
        <title>The status, quality, and expansion of the NIH full-length cDNA project: the Mammalian Gene Collection (MGC).</title>
        <authorList>
            <consortium name="The MGC Project Team"/>
        </authorList>
    </citation>
    <scope>NUCLEOTIDE SEQUENCE [LARGE SCALE MRNA]</scope>
    <scope>VARIANTS CYS-149; MET-279 AND TYR-493</scope>
</reference>
<reference key="5">
    <citation type="journal article" date="2017" name="J. Med. Genet.">
        <title>and is allelic with dominant monilethrix.</title>
        <authorList>
            <person name="Shah K."/>
            <person name="Ansar M."/>
            <person name="Mughal Z.U."/>
            <person name="Khan F.S."/>
            <person name="Ahmad W."/>
            <person name="Ferrara T.M."/>
            <person name="Spritz R.A."/>
        </authorList>
    </citation>
    <scope>INVOLVEMENT IN EKVP5</scope>
</reference>
<reference key="6">
    <citation type="journal article" date="2005" name="J. Med. Genet.">
        <title>A missense mutation in the type II hair keratin hHb3 is associated with monilethrix.</title>
        <authorList>
            <person name="van Steensel M.A."/>
            <person name="Steijlen P.M."/>
            <person name="Bladergroen R.S."/>
            <person name="Vermeer M."/>
            <person name="van Geel M."/>
        </authorList>
    </citation>
    <scope>VARIANT MNLIX LYS-407</scope>
</reference>
<reference key="7">
    <citation type="journal article" date="2015" name="Exp. Dermatol.">
        <title>Novel KRT83 and KRT86 mutations associated with monilethrix.</title>
        <authorList>
            <person name="van Steensel M."/>
            <person name="Vreeburg M."/>
            <person name="Urbina M.T."/>
            <person name="Lopez P."/>
            <person name="Morice-Picard F."/>
            <person name="van Geel M."/>
        </authorList>
    </citation>
    <scope>VARIANTS MNLIX LYS-407 AND LYS-418</scope>
</reference>
<accession>P78385</accession>
<accession>A1A4S9</accession>
<accession>B2RC21</accession>
<accession>Q6NT21</accession>
<accession>Q9NSB3</accession>
<keyword id="KW-0175">Coiled coil</keyword>
<keyword id="KW-0225">Disease variant</keyword>
<keyword id="KW-0403">Intermediate filament</keyword>
<keyword id="KW-1017">Isopeptide bond</keyword>
<keyword id="KW-0416">Keratin</keyword>
<keyword id="KW-1007">Palmoplantar keratoderma</keyword>
<keyword id="KW-1267">Proteomics identification</keyword>
<keyword id="KW-1185">Reference proteome</keyword>
<keyword id="KW-0832">Ubl conjugation</keyword>
<name>KRT83_HUMAN</name>
<comment type="subunit">
    <text>Heterotetramer of two type I and two type II keratins.</text>
</comment>
<comment type="interaction">
    <interactant intactId="EBI-10221390">
        <id>P78385</id>
    </interactant>
    <interactant intactId="EBI-12006944">
        <id>O43184-4</id>
        <label>ADAM12</label>
    </interactant>
    <organismsDiffer>false</organismsDiffer>
    <experiments>3</experiments>
</comment>
<comment type="interaction">
    <interactant intactId="EBI-10221390">
        <id>P78385</id>
    </interactant>
    <interactant intactId="EBI-11954519">
        <id>Q49AR9</id>
        <label>ANKS1A</label>
    </interactant>
    <organismsDiffer>false</organismsDiffer>
    <experiments>3</experiments>
</comment>
<comment type="interaction">
    <interactant intactId="EBI-10221390">
        <id>P78385</id>
    </interactant>
    <interactant intactId="EBI-6660291">
        <id>Q6NUJ2</id>
        <label>C11orf87</label>
    </interactant>
    <organismsDiffer>false</organismsDiffer>
    <experiments>3</experiments>
</comment>
<comment type="interaction">
    <interactant intactId="EBI-10221390">
        <id>P78385</id>
    </interactant>
    <interactant intactId="EBI-11752486">
        <id>Q86XR8-3</id>
        <label>CEP57</label>
    </interactant>
    <organismsDiffer>false</organismsDiffer>
    <experiments>3</experiments>
</comment>
<comment type="interaction">
    <interactant intactId="EBI-10221390">
        <id>P78385</id>
    </interactant>
    <interactant intactId="EBI-10192698">
        <id>Q02930-3</id>
        <label>CREB5</label>
    </interactant>
    <organismsDiffer>false</organismsDiffer>
    <experiments>3</experiments>
</comment>
<comment type="interaction">
    <interactant intactId="EBI-10221390">
        <id>P78385</id>
    </interactant>
    <interactant intactId="EBI-3867333">
        <id>A8MQ03</id>
        <label>CYSRT1</label>
    </interactant>
    <organismsDiffer>false</organismsDiffer>
    <experiments>3</experiments>
</comment>
<comment type="interaction">
    <interactant intactId="EBI-10221390">
        <id>P78385</id>
    </interactant>
    <interactant intactId="EBI-744104">
        <id>P55040</id>
        <label>GEM</label>
    </interactant>
    <organismsDiffer>false</organismsDiffer>
    <experiments>3</experiments>
</comment>
<comment type="interaction">
    <interactant intactId="EBI-10221390">
        <id>P78385</id>
    </interactant>
    <interactant intactId="EBI-11975289">
        <id>Q9Y223-2</id>
        <label>GNE</label>
    </interactant>
    <organismsDiffer>false</organismsDiffer>
    <experiments>3</experiments>
</comment>
<comment type="interaction">
    <interactant intactId="EBI-10221390">
        <id>P78385</id>
    </interactant>
    <interactant intactId="EBI-353467">
        <id>P09211</id>
        <label>GSTP1</label>
    </interactant>
    <organismsDiffer>false</organismsDiffer>
    <experiments>3</experiments>
</comment>
<comment type="interaction">
    <interactant intactId="EBI-10221390">
        <id>P78385</id>
    </interactant>
    <interactant intactId="EBI-740785">
        <id>P49639</id>
        <label>HOXA1</label>
    </interactant>
    <organismsDiffer>false</organismsDiffer>
    <experiments>8</experiments>
</comment>
<comment type="interaction">
    <interactant intactId="EBI-10221390">
        <id>P78385</id>
    </interactant>
    <interactant intactId="EBI-739566">
        <id>P19012</id>
        <label>KRT15</label>
    </interactant>
    <organismsDiffer>false</organismsDiffer>
    <experiments>3</experiments>
</comment>
<comment type="interaction">
    <interactant intactId="EBI-10221390">
        <id>P78385</id>
    </interactant>
    <interactant intactId="EBI-356410">
        <id>P08779</id>
        <label>KRT16</label>
    </interactant>
    <organismsDiffer>false</organismsDiffer>
    <experiments>3</experiments>
</comment>
<comment type="interaction">
    <interactant intactId="EBI-10221390">
        <id>P78385</id>
    </interactant>
    <interactant intactId="EBI-742756">
        <id>P08727</id>
        <label>KRT19</label>
    </interactant>
    <organismsDiffer>false</organismsDiffer>
    <experiments>3</experiments>
</comment>
<comment type="interaction">
    <interactant intactId="EBI-10221390">
        <id>P78385</id>
    </interactant>
    <interactant intactId="EBI-11980019">
        <id>Q7Z3Z0</id>
        <label>KRT25</label>
    </interactant>
    <organismsDiffer>false</organismsDiffer>
    <experiments>3</experiments>
</comment>
<comment type="interaction">
    <interactant intactId="EBI-10221390">
        <id>P78385</id>
    </interactant>
    <interactant intactId="EBI-3044087">
        <id>Q7Z3Y8</id>
        <label>KRT27</label>
    </interactant>
    <organismsDiffer>false</organismsDiffer>
    <experiments>3</experiments>
</comment>
<comment type="interaction">
    <interactant intactId="EBI-10221390">
        <id>P78385</id>
    </interactant>
    <interactant intactId="EBI-948001">
        <id>Q15323</id>
        <label>KRT31</label>
    </interactant>
    <organismsDiffer>false</organismsDiffer>
    <experiments>6</experiments>
</comment>
<comment type="interaction">
    <interactant intactId="EBI-10221390">
        <id>P78385</id>
    </interactant>
    <interactant intactId="EBI-1049638">
        <id>Q14525</id>
        <label>KRT33B</label>
    </interactant>
    <organismsDiffer>false</organismsDiffer>
    <experiments>3</experiments>
</comment>
<comment type="interaction">
    <interactant intactId="EBI-10221390">
        <id>P78385</id>
    </interactant>
    <interactant intactId="EBI-1047093">
        <id>O76011</id>
        <label>KRT34</label>
    </interactant>
    <organismsDiffer>false</organismsDiffer>
    <experiments>3</experiments>
</comment>
<comment type="interaction">
    <interactant intactId="EBI-10221390">
        <id>P78385</id>
    </interactant>
    <interactant intactId="EBI-1058674">
        <id>Q92764</id>
        <label>KRT35</label>
    </interactant>
    <organismsDiffer>false</organismsDiffer>
    <experiments>3</experiments>
</comment>
<comment type="interaction">
    <interactant intactId="EBI-10221390">
        <id>P78385</id>
    </interactant>
    <interactant intactId="EBI-1045716">
        <id>O76014</id>
        <label>KRT37</label>
    </interactant>
    <organismsDiffer>false</organismsDiffer>
    <experiments>3</experiments>
</comment>
<comment type="interaction">
    <interactant intactId="EBI-10221390">
        <id>P78385</id>
    </interactant>
    <interactant intactId="EBI-1047263">
        <id>O76015</id>
        <label>KRT38</label>
    </interactant>
    <organismsDiffer>false</organismsDiffer>
    <experiments>8</experiments>
</comment>
<comment type="interaction">
    <interactant intactId="EBI-10221390">
        <id>P78385</id>
    </interactant>
    <interactant intactId="EBI-11958242">
        <id>Q6A163</id>
        <label>KRT39</label>
    </interactant>
    <organismsDiffer>false</organismsDiffer>
    <experiments>3</experiments>
</comment>
<comment type="interaction">
    <interactant intactId="EBI-10221390">
        <id>P78385</id>
    </interactant>
    <interactant intactId="EBI-10171697">
        <id>Q6A162</id>
        <label>KRT40</label>
    </interactant>
    <organismsDiffer>false</organismsDiffer>
    <experiments>3</experiments>
</comment>
<comment type="interaction">
    <interactant intactId="EBI-10221390">
        <id>P78385</id>
    </interactant>
    <interactant intactId="EBI-10172290">
        <id>P60409</id>
        <label>KRTAP10-7</label>
    </interactant>
    <organismsDiffer>false</organismsDiffer>
    <experiments>3</experiments>
</comment>
<comment type="interaction">
    <interactant intactId="EBI-10221390">
        <id>P78385</id>
    </interactant>
    <interactant intactId="EBI-10171774">
        <id>P60410</id>
        <label>KRTAP10-8</label>
    </interactant>
    <organismsDiffer>false</organismsDiffer>
    <experiments>3</experiments>
</comment>
<comment type="interaction">
    <interactant intactId="EBI-10221390">
        <id>P78385</id>
    </interactant>
    <interactant intactId="EBI-10172052">
        <id>P60411</id>
        <label>KRTAP10-9</label>
    </interactant>
    <organismsDiffer>false</organismsDiffer>
    <experiments>3</experiments>
</comment>
<comment type="interaction">
    <interactant intactId="EBI-10221390">
        <id>P78385</id>
    </interactant>
    <interactant intactId="EBI-1052037">
        <id>Q8IUC1</id>
        <label>KRTAP11-1</label>
    </interactant>
    <organismsDiffer>false</organismsDiffer>
    <experiments>3</experiments>
</comment>
<comment type="interaction">
    <interactant intactId="EBI-10221390">
        <id>P78385</id>
    </interactant>
    <interactant intactId="EBI-10241252">
        <id>Q3SY46</id>
        <label>KRTAP13-3</label>
    </interactant>
    <organismsDiffer>false</organismsDiffer>
    <experiments>3</experiments>
</comment>
<comment type="interaction">
    <interactant intactId="EBI-10221390">
        <id>P78385</id>
    </interactant>
    <interactant intactId="EBI-3957694">
        <id>Q9BYR6</id>
        <label>KRTAP3-3</label>
    </interactant>
    <organismsDiffer>false</organismsDiffer>
    <experiments>5</experiments>
</comment>
<comment type="interaction">
    <interactant intactId="EBI-10221390">
        <id>P78385</id>
    </interactant>
    <interactant intactId="EBI-11962084">
        <id>Q3LI66</id>
        <label>KRTAP6-2</label>
    </interactant>
    <organismsDiffer>false</organismsDiffer>
    <experiments>3</experiments>
</comment>
<comment type="interaction">
    <interactant intactId="EBI-10221390">
        <id>P78385</id>
    </interactant>
    <interactant intactId="EBI-16439278">
        <id>Q6FHY5</id>
        <label>MEOX2</label>
    </interactant>
    <organismsDiffer>false</organismsDiffer>
    <experiments>3</experiments>
</comment>
<comment type="interaction">
    <interactant intactId="EBI-10221390">
        <id>P78385</id>
    </interactant>
    <interactant intactId="EBI-945833">
        <id>Q7Z3S9</id>
        <label>NOTCH2NLA</label>
    </interactant>
    <organismsDiffer>false</organismsDiffer>
    <experiments>3</experiments>
</comment>
<comment type="interaction">
    <interactant intactId="EBI-10221390">
        <id>P78385</id>
    </interactant>
    <interactant intactId="EBI-22310682">
        <id>P0DPK4</id>
        <label>NOTCH2NLC</label>
    </interactant>
    <organismsDiffer>false</organismsDiffer>
    <experiments>3</experiments>
</comment>
<comment type="interaction">
    <interactant intactId="EBI-10221390">
        <id>P78385</id>
    </interactant>
    <interactant intactId="EBI-11742836">
        <id>Q16656-4</id>
        <label>NRF1</label>
    </interactant>
    <organismsDiffer>false</organismsDiffer>
    <experiments>3</experiments>
</comment>
<comment type="interaction">
    <interactant intactId="EBI-10221390">
        <id>P78385</id>
    </interactant>
    <interactant intactId="EBI-536879">
        <id>O43482</id>
        <label>OIP5</label>
    </interactant>
    <organismsDiffer>false</organismsDiffer>
    <experiments>3</experiments>
</comment>
<comment type="interaction">
    <interactant intactId="EBI-10221390">
        <id>P78385</id>
    </interactant>
    <interactant intactId="EBI-740446">
        <id>P32242</id>
        <label>OTX1</label>
    </interactant>
    <organismsDiffer>false</organismsDiffer>
    <experiments>3</experiments>
</comment>
<comment type="interaction">
    <interactant intactId="EBI-10221390">
        <id>P78385</id>
    </interactant>
    <interactant intactId="EBI-748265">
        <id>P78337</id>
        <label>PITX1</label>
    </interactant>
    <organismsDiffer>false</organismsDiffer>
    <experiments>3</experiments>
</comment>
<comment type="interaction">
    <interactant intactId="EBI-10221390">
        <id>P78385</id>
    </interactant>
    <interactant intactId="EBI-12014286">
        <id>Q494U1-3</id>
        <label>PLEKHN1</label>
    </interactant>
    <organismsDiffer>false</organismsDiffer>
    <experiments>3</experiments>
</comment>
<comment type="interaction">
    <interactant intactId="EBI-10221390">
        <id>P78385</id>
    </interactant>
    <interactant intactId="EBI-17236143">
        <id>Q12837</id>
        <label>POU4F2</label>
    </interactant>
    <organismsDiffer>false</organismsDiffer>
    <experiments>3</experiments>
</comment>
<comment type="interaction">
    <interactant intactId="EBI-10221390">
        <id>P78385</id>
    </interactant>
    <interactant intactId="EBI-2818796">
        <id>Q8WTX9</id>
        <label>ZDHHC1</label>
    </interactant>
    <organismsDiffer>false</organismsDiffer>
    <experiments>3</experiments>
</comment>
<comment type="tissue specificity">
    <text evidence="8">Synthesis begins in the cortex 10-15 cell layers above the apex of the dermal papilla and ends abruptly in the middle of the cortex.</text>
</comment>
<comment type="disease" evidence="5 6">
    <disease id="DI-01992">
        <name>Monilethrix</name>
        <acronym>MNLIX</acronym>
        <description>A disorder clinically characterized by alopecia and follicular papules. Affected hairs have uniform elliptical nodes of normal thickness and intermittent constrictions, internodes at which the hair easily breaks. Usually only the scalp is involved, but in severe forms, the secondary sexual hair, eyebrows, eyelashes, and nails may also be affected.</description>
        <dbReference type="MIM" id="158000"/>
    </disease>
    <text>The disease is caused by variants affecting the gene represented in this entry.</text>
</comment>
<comment type="disease" evidence="7">
    <disease id="DI-05138">
        <name>Erythrokeratodermia variabilis et progressiva 5</name>
        <acronym>EKVP5</acronym>
        <description>A form of erythrokeratodermia variabilis et progressiva, a genodermatosis characterized by the coexistence of two independent skin lesions: transient erythema and hyperkeratosis that is usually localized but occasionally occurs in its generalized form. Clinical presentation varies significantly within a family and from one family to another. Palmoplantar keratoderma is present in around 50% of cases. EKVP5 inheritance is autosomal recessive.</description>
        <dbReference type="MIM" id="617756"/>
    </disease>
    <text>The disease is caused by variants affecting the gene represented in this entry.</text>
</comment>
<comment type="miscellaneous">
    <text>There are two types of hair/microfibrillar keratin, I (acidic) and II (neutral to basic).</text>
</comment>
<comment type="similarity">
    <text evidence="2">Belongs to the intermediate filament family.</text>
</comment>
<organism>
    <name type="scientific">Homo sapiens</name>
    <name type="common">Human</name>
    <dbReference type="NCBI Taxonomy" id="9606"/>
    <lineage>
        <taxon>Eukaryota</taxon>
        <taxon>Metazoa</taxon>
        <taxon>Chordata</taxon>
        <taxon>Craniata</taxon>
        <taxon>Vertebrata</taxon>
        <taxon>Euteleostomi</taxon>
        <taxon>Mammalia</taxon>
        <taxon>Eutheria</taxon>
        <taxon>Euarchontoglires</taxon>
        <taxon>Primates</taxon>
        <taxon>Haplorrhini</taxon>
        <taxon>Catarrhini</taxon>
        <taxon>Hominidae</taxon>
        <taxon>Homo</taxon>
    </lineage>
</organism>
<proteinExistence type="evidence at protein level"/>